<keyword id="KW-0175">Coiled coil</keyword>
<keyword id="KW-0217">Developmental protein</keyword>
<keyword id="KW-0238">DNA-binding</keyword>
<keyword id="KW-0371">Homeobox</keyword>
<keyword id="KW-0539">Nucleus</keyword>
<keyword id="KW-0597">Phosphoprotein</keyword>
<keyword id="KW-1185">Reference proteome</keyword>
<keyword id="KW-0677">Repeat</keyword>
<keyword id="KW-0804">Transcription</keyword>
<keyword id="KW-0805">Transcription regulation</keyword>
<gene>
    <name type="primary">ct</name>
    <name type="ORF">CG11387</name>
</gene>
<proteinExistence type="evidence at protein level"/>
<organism>
    <name type="scientific">Drosophila melanogaster</name>
    <name type="common">Fruit fly</name>
    <dbReference type="NCBI Taxonomy" id="7227"/>
    <lineage>
        <taxon>Eukaryota</taxon>
        <taxon>Metazoa</taxon>
        <taxon>Ecdysozoa</taxon>
        <taxon>Arthropoda</taxon>
        <taxon>Hexapoda</taxon>
        <taxon>Insecta</taxon>
        <taxon>Pterygota</taxon>
        <taxon>Neoptera</taxon>
        <taxon>Endopterygota</taxon>
        <taxon>Diptera</taxon>
        <taxon>Brachycera</taxon>
        <taxon>Muscomorpha</taxon>
        <taxon>Ephydroidea</taxon>
        <taxon>Drosophilidae</taxon>
        <taxon>Drosophila</taxon>
        <taxon>Sophophora</taxon>
    </lineage>
</organism>
<protein>
    <recommendedName>
        <fullName>Homeobox protein cut</fullName>
    </recommendedName>
</protein>
<sequence length="2175" mass="233629">MQPTLPQAAGTADMDLTAVQSINDWFFKKEQIYLLAQFWQQRATLAEKEVNTLKEQLSTGNPDSNLNSENSDTAAAAATAAAVAAVVAGATATNDIEDEQQQQLQQTASGGILESDSDKLLNSSIVAAAITLQQQNGSNLLANTNTPSPSPPLLSAEQQQQLQSSLQQSGGVGGACLNPKLFFNHAQQMMMMEAAAAAAAAALQQQQQQQSPLHSPANEVAIPTEQPAATVATGAAAAAAAAATPIATGNVKSGSTTSNANHTNSNNSHQDEEELDDEEEDEEEDEDEDDEEENASMQSNADDMELDAQQETRTEPSATTQQQHQQQDTEDLEENKDAGEASLNVSNNHNTTDSNNSCSRKNNNGGNESEQHVASSAEDDDCANNNTNTSNNNNTSNTATSNTNNNNNNNSSSGNSEKRKKKNNNNNNGQPAVLLAAKDKEIKALLDELQRLRAQEQTHLVQIQRLEEHLEVKRQHIIRLEARLDKQQINEALAEATALSAAASTNNNNNSQSSDNNKKLNTAAERPMDASSNADLPESTKAPVPAEDDEEDEDQAMLVDSEEAEDKPEDSHHDDDEDEDEDREAVNATTTDSNELKIKKEQHSPLDLNVLSPNSAIAAAAAAAAAAACANDPNKFQALLIERTKALAAEALKNGASDALSEDAHHQQQQHHQQQHQHQQQHHQQQHLHQQHHHHLQQQPNSGSNSNPASNDHHHGHHLHGHGLLHPSSAHHLHHQTTESNSNSSTPTAAGNNNGSNNSSSNTNANSTAQLAASLASTLNGTKSLMQEDSNGLAAVAMAAHAQHAAALGPGFLPGLPAFQFAAAQVAAGGDGRGHYRFADSELQLPPGASMAGRLGESLIPKGDPMEAKLQEMLRYNMDKYANQALDTLHISRRVRELLSVHNIGQRLFAKYILGLSQGTVSELLSKPKPWDKLTEKGRDSYRKMHAWACDDNAVMLLKSLIPKKDSGLPQYAGRGAGGAGGDDSMSEDRIAHILSEASSLMKQSSVAQHREQERRSHGGEDSHSNEDSKSPPQSCTSPFFKVENQLKQHQHLNPEQAAAQQREREREQREREQQQRLRHDDQDKMARLYQELIARTPRETAFPSFLFSPSLFGGAAGMPGAASNAFPAMADENMRHVFEREIAKLQQHQQQQQAAQAQAQFPNFSSLMALQQQVLNGAQDLSLAAAAAKDIKLNGQRSSLEHSAGSSSCSKDGERDDAYPSSLHGRKSEGGGTPAPPAPPSGPGTGAGAPPTAAPPTGGASSNSAAPSPLSNSILPPALSSQGEEFAATASPLQRMASITNSLITQPPVTPHHSTPQRPTKAVLPPITQQQFDMFNNLNTEDIVRRVKEALSQYSISQRLFGESVLGLSQGSVSDLLARPKPWHMLTQKGREPFIRMKMFLEDENAVHKLVASQYKIAPEKLMRTGSYSGSPQMPQGLASKMQAASLPMQKMMSELKLQEPAQAQHLMQQMQAAAMSAAMQQQQVAQAQQQAQQAQQAQQHLQQQAQQHLQQQQHLAQQQHPHQQHHQAAAAAAALHHQSMLLTSPGLPPQHAISLPPSAGGAQPGGPGGNQGSSNPSNSEKKPMLMPVHGTNAMRSLHQHMSPTVYEMAALTQDLDTHDITTKIKEALLANNIGQKIFGEAVLGLSQGSVSELLSKPKPWHMLSIKGREPFIRMQLWLSDANNVERLQLLKNERREASKRRRSTGPNQQDNSSDTSSNDTNDFYTSSPGPGSVGSGVGGAPPSKKQRVLFSEEQKEALRLAFALDPYPNVGTIEFLANELGLATRTITNWFHNHRMRLKQQVPHGPAGQDNPIPSRESTSATPFDPVQFRILLQQRLLELHKERMGMSGAPIPYPPYFAAAAILGRSLAGIPGAAAAAGAAAAAAAVGASGGDELQALNQAFKEQMSGLDLSMPTLKRERSDDYQDDLELEGGGHNLSDNESLEGQEPEDKTTDYEKVLHKSALAAAAAYMSNAVRSSRRKPAAPQWVNPAGAVTNPSAVVAAVAAAAAAAADNERIINGVCVMQASEYGRDDTDSNKPTDGGNDSDHEHAQLEIDQRFMEPEVHIKQEEDDDEEQSGSVNLDNEDNATSEQKLKVINEEKLRMVRVRRLSSTGGGSSEEMPAPLAPPPPPPAASSSIVSGESTTSSSSSSNTSSSTPAVTTAAATAAAGWNY</sequence>
<name>CUT_DROME</name>
<evidence type="ECO:0000255" key="1"/>
<evidence type="ECO:0000255" key="2">
    <source>
        <dbReference type="PROSITE-ProRule" id="PRU00108"/>
    </source>
</evidence>
<evidence type="ECO:0000255" key="3">
    <source>
        <dbReference type="PROSITE-ProRule" id="PRU00374"/>
    </source>
</evidence>
<evidence type="ECO:0000256" key="4">
    <source>
        <dbReference type="SAM" id="MobiDB-lite"/>
    </source>
</evidence>
<evidence type="ECO:0000269" key="5">
    <source>
    </source>
</evidence>
<evidence type="ECO:0000305" key="6"/>
<comment type="function">
    <text>Regulator of cell fate decisions in multiple lineages. Specifically, functions as a determination factor that specifies sensory organ identity in precursor cells. Probably also involved in cell type specification of Malpighian tubules. In absence of cut gene external sensory organs are transformed into chordotonal organs.</text>
</comment>
<comment type="subcellular location">
    <subcellularLocation>
        <location evidence="6">Nucleus</location>
    </subcellularLocation>
</comment>
<comment type="tissue specificity">
    <text>Detected in many cells in the central nervous system, all external sensory organs, some peripheral neurons, and in the non-neural cells of the spiracles and the Malpighian tubules.</text>
</comment>
<comment type="developmental stage">
    <text>Cell-specific pattern of expression. Broadly expressed during embryonic development.</text>
</comment>
<comment type="miscellaneous">
    <text>Asn-1791 may participate in regulating DNA-binding activity by promoting homo- and heterodimerization.</text>
</comment>
<comment type="similarity">
    <text evidence="6">Belongs to the CUT homeobox family.</text>
</comment>
<reference key="1">
    <citation type="journal article" date="1988" name="Nature">
        <title>Primary structure and expression of a product from cut, a locus involved in specifying sensory organ identity in Drosophila.</title>
        <authorList>
            <person name="Blochlinger K."/>
            <person name="Bodmer R."/>
            <person name="Jack J."/>
            <person name="Jan L.Y."/>
            <person name="Jan Y.N."/>
        </authorList>
    </citation>
    <scope>NUCLEOTIDE SEQUENCE [MRNA]</scope>
</reference>
<reference key="2">
    <citation type="journal article" date="2000" name="Science">
        <title>The genome sequence of Drosophila melanogaster.</title>
        <authorList>
            <person name="Adams M.D."/>
            <person name="Celniker S.E."/>
            <person name="Holt R.A."/>
            <person name="Evans C.A."/>
            <person name="Gocayne J.D."/>
            <person name="Amanatides P.G."/>
            <person name="Scherer S.E."/>
            <person name="Li P.W."/>
            <person name="Hoskins R.A."/>
            <person name="Galle R.F."/>
            <person name="George R.A."/>
            <person name="Lewis S.E."/>
            <person name="Richards S."/>
            <person name="Ashburner M."/>
            <person name="Henderson S.N."/>
            <person name="Sutton G.G."/>
            <person name="Wortman J.R."/>
            <person name="Yandell M.D."/>
            <person name="Zhang Q."/>
            <person name="Chen L.X."/>
            <person name="Brandon R.C."/>
            <person name="Rogers Y.-H.C."/>
            <person name="Blazej R.G."/>
            <person name="Champe M."/>
            <person name="Pfeiffer B.D."/>
            <person name="Wan K.H."/>
            <person name="Doyle C."/>
            <person name="Baxter E.G."/>
            <person name="Helt G."/>
            <person name="Nelson C.R."/>
            <person name="Miklos G.L.G."/>
            <person name="Abril J.F."/>
            <person name="Agbayani A."/>
            <person name="An H.-J."/>
            <person name="Andrews-Pfannkoch C."/>
            <person name="Baldwin D."/>
            <person name="Ballew R.M."/>
            <person name="Basu A."/>
            <person name="Baxendale J."/>
            <person name="Bayraktaroglu L."/>
            <person name="Beasley E.M."/>
            <person name="Beeson K.Y."/>
            <person name="Benos P.V."/>
            <person name="Berman B.P."/>
            <person name="Bhandari D."/>
            <person name="Bolshakov S."/>
            <person name="Borkova D."/>
            <person name="Botchan M.R."/>
            <person name="Bouck J."/>
            <person name="Brokstein P."/>
            <person name="Brottier P."/>
            <person name="Burtis K.C."/>
            <person name="Busam D.A."/>
            <person name="Butler H."/>
            <person name="Cadieu E."/>
            <person name="Center A."/>
            <person name="Chandra I."/>
            <person name="Cherry J.M."/>
            <person name="Cawley S."/>
            <person name="Dahlke C."/>
            <person name="Davenport L.B."/>
            <person name="Davies P."/>
            <person name="de Pablos B."/>
            <person name="Delcher A."/>
            <person name="Deng Z."/>
            <person name="Mays A.D."/>
            <person name="Dew I."/>
            <person name="Dietz S.M."/>
            <person name="Dodson K."/>
            <person name="Doup L.E."/>
            <person name="Downes M."/>
            <person name="Dugan-Rocha S."/>
            <person name="Dunkov B.C."/>
            <person name="Dunn P."/>
            <person name="Durbin K.J."/>
            <person name="Evangelista C.C."/>
            <person name="Ferraz C."/>
            <person name="Ferriera S."/>
            <person name="Fleischmann W."/>
            <person name="Fosler C."/>
            <person name="Gabrielian A.E."/>
            <person name="Garg N.S."/>
            <person name="Gelbart W.M."/>
            <person name="Glasser K."/>
            <person name="Glodek A."/>
            <person name="Gong F."/>
            <person name="Gorrell J.H."/>
            <person name="Gu Z."/>
            <person name="Guan P."/>
            <person name="Harris M."/>
            <person name="Harris N.L."/>
            <person name="Harvey D.A."/>
            <person name="Heiman T.J."/>
            <person name="Hernandez J.R."/>
            <person name="Houck J."/>
            <person name="Hostin D."/>
            <person name="Houston K.A."/>
            <person name="Howland T.J."/>
            <person name="Wei M.-H."/>
            <person name="Ibegwam C."/>
            <person name="Jalali M."/>
            <person name="Kalush F."/>
            <person name="Karpen G.H."/>
            <person name="Ke Z."/>
            <person name="Kennison J.A."/>
            <person name="Ketchum K.A."/>
            <person name="Kimmel B.E."/>
            <person name="Kodira C.D."/>
            <person name="Kraft C.L."/>
            <person name="Kravitz S."/>
            <person name="Kulp D."/>
            <person name="Lai Z."/>
            <person name="Lasko P."/>
            <person name="Lei Y."/>
            <person name="Levitsky A.A."/>
            <person name="Li J.H."/>
            <person name="Li Z."/>
            <person name="Liang Y."/>
            <person name="Lin X."/>
            <person name="Liu X."/>
            <person name="Mattei B."/>
            <person name="McIntosh T.C."/>
            <person name="McLeod M.P."/>
            <person name="McPherson D."/>
            <person name="Merkulov G."/>
            <person name="Milshina N.V."/>
            <person name="Mobarry C."/>
            <person name="Morris J."/>
            <person name="Moshrefi A."/>
            <person name="Mount S.M."/>
            <person name="Moy M."/>
            <person name="Murphy B."/>
            <person name="Murphy L."/>
            <person name="Muzny D.M."/>
            <person name="Nelson D.L."/>
            <person name="Nelson D.R."/>
            <person name="Nelson K.A."/>
            <person name="Nixon K."/>
            <person name="Nusskern D.R."/>
            <person name="Pacleb J.M."/>
            <person name="Palazzolo M."/>
            <person name="Pittman G.S."/>
            <person name="Pan S."/>
            <person name="Pollard J."/>
            <person name="Puri V."/>
            <person name="Reese M.G."/>
            <person name="Reinert K."/>
            <person name="Remington K."/>
            <person name="Saunders R.D.C."/>
            <person name="Scheeler F."/>
            <person name="Shen H."/>
            <person name="Shue B.C."/>
            <person name="Siden-Kiamos I."/>
            <person name="Simpson M."/>
            <person name="Skupski M.P."/>
            <person name="Smith T.J."/>
            <person name="Spier E."/>
            <person name="Spradling A.C."/>
            <person name="Stapleton M."/>
            <person name="Strong R."/>
            <person name="Sun E."/>
            <person name="Svirskas R."/>
            <person name="Tector C."/>
            <person name="Turner R."/>
            <person name="Venter E."/>
            <person name="Wang A.H."/>
            <person name="Wang X."/>
            <person name="Wang Z.-Y."/>
            <person name="Wassarman D.A."/>
            <person name="Weinstock G.M."/>
            <person name="Weissenbach J."/>
            <person name="Williams S.M."/>
            <person name="Woodage T."/>
            <person name="Worley K.C."/>
            <person name="Wu D."/>
            <person name="Yang S."/>
            <person name="Yao Q.A."/>
            <person name="Ye J."/>
            <person name="Yeh R.-F."/>
            <person name="Zaveri J.S."/>
            <person name="Zhan M."/>
            <person name="Zhang G."/>
            <person name="Zhao Q."/>
            <person name="Zheng L."/>
            <person name="Zheng X.H."/>
            <person name="Zhong F.N."/>
            <person name="Zhong W."/>
            <person name="Zhou X."/>
            <person name="Zhu S.C."/>
            <person name="Zhu X."/>
            <person name="Smith H.O."/>
            <person name="Gibbs R.A."/>
            <person name="Myers E.W."/>
            <person name="Rubin G.M."/>
            <person name="Venter J.C."/>
        </authorList>
    </citation>
    <scope>NUCLEOTIDE SEQUENCE [LARGE SCALE GENOMIC DNA]</scope>
    <source>
        <strain>Berkeley</strain>
    </source>
</reference>
<reference key="3">
    <citation type="journal article" date="2002" name="Genome Biol.">
        <title>Annotation of the Drosophila melanogaster euchromatic genome: a systematic review.</title>
        <authorList>
            <person name="Misra S."/>
            <person name="Crosby M.A."/>
            <person name="Mungall C.J."/>
            <person name="Matthews B.B."/>
            <person name="Campbell K.S."/>
            <person name="Hradecky P."/>
            <person name="Huang Y."/>
            <person name="Kaminker J.S."/>
            <person name="Millburn G.H."/>
            <person name="Prochnik S.E."/>
            <person name="Smith C.D."/>
            <person name="Tupy J.L."/>
            <person name="Whitfield E.J."/>
            <person name="Bayraktaroglu L."/>
            <person name="Berman B.P."/>
            <person name="Bettencourt B.R."/>
            <person name="Celniker S.E."/>
            <person name="de Grey A.D.N.J."/>
            <person name="Drysdale R.A."/>
            <person name="Harris N.L."/>
            <person name="Richter J."/>
            <person name="Russo S."/>
            <person name="Schroeder A.J."/>
            <person name="Shu S.Q."/>
            <person name="Stapleton M."/>
            <person name="Yamada C."/>
            <person name="Ashburner M."/>
            <person name="Gelbart W.M."/>
            <person name="Rubin G.M."/>
            <person name="Lewis S.E."/>
        </authorList>
    </citation>
    <scope>GENOME REANNOTATION</scope>
    <source>
        <strain>Berkeley</strain>
    </source>
</reference>
<reference key="4">
    <citation type="journal article" date="2008" name="J. Proteome Res.">
        <title>Phosphoproteome analysis of Drosophila melanogaster embryos.</title>
        <authorList>
            <person name="Zhai B."/>
            <person name="Villen J."/>
            <person name="Beausoleil S.A."/>
            <person name="Mintseris J."/>
            <person name="Gygi S.P."/>
        </authorList>
    </citation>
    <scope>PHOSPHORYLATION [LARGE SCALE ANALYSIS] AT SER-1940 AND SER-1944</scope>
    <scope>IDENTIFICATION BY MASS SPECTROMETRY</scope>
    <source>
        <tissue>Embryo</tissue>
    </source>
</reference>
<dbReference type="EMBL" id="X07985">
    <property type="protein sequence ID" value="CAA30794.1"/>
    <property type="molecule type" value="mRNA"/>
</dbReference>
<dbReference type="EMBL" id="AE014298">
    <property type="protein sequence ID" value="AAF46264.2"/>
    <property type="molecule type" value="Genomic_DNA"/>
</dbReference>
<dbReference type="PIR" id="S03170">
    <property type="entry name" value="S03170"/>
</dbReference>
<dbReference type="RefSeq" id="NP_524764.1">
    <property type="nucleotide sequence ID" value="NM_080025.2"/>
</dbReference>
<dbReference type="SMR" id="P10180"/>
<dbReference type="BioGRID" id="69119">
    <property type="interactions" value="104"/>
</dbReference>
<dbReference type="DIP" id="DIP-19788N"/>
<dbReference type="FunCoup" id="P10180">
    <property type="interactions" value="344"/>
</dbReference>
<dbReference type="IntAct" id="P10180">
    <property type="interactions" value="10"/>
</dbReference>
<dbReference type="STRING" id="7227.FBpp0071026"/>
<dbReference type="GlyGen" id="P10180">
    <property type="glycosylation" value="4 sites"/>
</dbReference>
<dbReference type="iPTMnet" id="P10180"/>
<dbReference type="PaxDb" id="7227-FBpp0113105"/>
<dbReference type="DNASU" id="44540"/>
<dbReference type="EnsemblMetazoa" id="FBtr0071068">
    <property type="protein sequence ID" value="FBpp0071026"/>
    <property type="gene ID" value="FBgn0004198"/>
</dbReference>
<dbReference type="GeneID" id="44540"/>
<dbReference type="KEGG" id="dme:Dmel_CG11387"/>
<dbReference type="UCSC" id="CG11387-RA">
    <property type="organism name" value="d. melanogaster"/>
</dbReference>
<dbReference type="AGR" id="FB:FBgn0004198"/>
<dbReference type="CTD" id="44540"/>
<dbReference type="FlyBase" id="FBgn0004198">
    <property type="gene designation" value="ct"/>
</dbReference>
<dbReference type="VEuPathDB" id="VectorBase:FBgn0004198"/>
<dbReference type="eggNOG" id="KOG2252">
    <property type="taxonomic scope" value="Eukaryota"/>
</dbReference>
<dbReference type="GeneTree" id="ENSGT00940000172657"/>
<dbReference type="HOGENOM" id="CLU_001394_1_0_1"/>
<dbReference type="InParanoid" id="P10180"/>
<dbReference type="OMA" id="STHQHND"/>
<dbReference type="OrthoDB" id="10257567at2759"/>
<dbReference type="SignaLink" id="P10180"/>
<dbReference type="BioGRID-ORCS" id="44540">
    <property type="hits" value="1 hit in 3 CRISPR screens"/>
</dbReference>
<dbReference type="ChiTaRS" id="ct">
    <property type="organism name" value="fly"/>
</dbReference>
<dbReference type="GenomeRNAi" id="44540"/>
<dbReference type="PRO" id="PR:P10180"/>
<dbReference type="Proteomes" id="UP000000803">
    <property type="component" value="Chromosome X"/>
</dbReference>
<dbReference type="Bgee" id="FBgn0004198">
    <property type="expression patterns" value="Expressed in adult Malpighian tubule principal cell of initial segment in Malpighian tubule and 263 other cell types or tissues"/>
</dbReference>
<dbReference type="ExpressionAtlas" id="P10180">
    <property type="expression patterns" value="baseline and differential"/>
</dbReference>
<dbReference type="GO" id="GO:0005634">
    <property type="term" value="C:nucleus"/>
    <property type="evidence" value="ECO:0000314"/>
    <property type="project" value="FlyBase"/>
</dbReference>
<dbReference type="GO" id="GO:0003677">
    <property type="term" value="F:DNA binding"/>
    <property type="evidence" value="ECO:0000304"/>
    <property type="project" value="FlyBase"/>
</dbReference>
<dbReference type="GO" id="GO:0000981">
    <property type="term" value="F:DNA-binding transcription factor activity, RNA polymerase II-specific"/>
    <property type="evidence" value="ECO:0000318"/>
    <property type="project" value="GO_Central"/>
</dbReference>
<dbReference type="GO" id="GO:0000977">
    <property type="term" value="F:RNA polymerase II transcription regulatory region sequence-specific DNA binding"/>
    <property type="evidence" value="ECO:0000318"/>
    <property type="project" value="GO_Central"/>
</dbReference>
<dbReference type="GO" id="GO:0000976">
    <property type="term" value="F:transcription cis-regulatory region binding"/>
    <property type="evidence" value="ECO:0000314"/>
    <property type="project" value="FlyBase"/>
</dbReference>
<dbReference type="GO" id="GO:0007469">
    <property type="term" value="P:antennal development"/>
    <property type="evidence" value="ECO:0000315"/>
    <property type="project" value="FlyBase"/>
</dbReference>
<dbReference type="GO" id="GO:0048098">
    <property type="term" value="P:antennal joint development"/>
    <property type="evidence" value="ECO:0000315"/>
    <property type="project" value="FlyBase"/>
</dbReference>
<dbReference type="GO" id="GO:0007417">
    <property type="term" value="P:central nervous system development"/>
    <property type="evidence" value="ECO:0000304"/>
    <property type="project" value="FlyBase"/>
</dbReference>
<dbReference type="GO" id="GO:0001745">
    <property type="term" value="P:compound eye morphogenesis"/>
    <property type="evidence" value="ECO:0000315"/>
    <property type="project" value="FlyBase"/>
</dbReference>
<dbReference type="GO" id="GO:0140059">
    <property type="term" value="P:dendrite arborization"/>
    <property type="evidence" value="ECO:0000316"/>
    <property type="project" value="FlyBase"/>
</dbReference>
<dbReference type="GO" id="GO:0070983">
    <property type="term" value="P:dendrite guidance"/>
    <property type="evidence" value="ECO:0000315"/>
    <property type="project" value="FlyBase"/>
</dbReference>
<dbReference type="GO" id="GO:0048813">
    <property type="term" value="P:dendrite morphogenesis"/>
    <property type="evidence" value="ECO:0000315"/>
    <property type="project" value="FlyBase"/>
</dbReference>
<dbReference type="GO" id="GO:0008585">
    <property type="term" value="P:female gonad development"/>
    <property type="evidence" value="ECO:0000304"/>
    <property type="project" value="FlyBase"/>
</dbReference>
<dbReference type="GO" id="GO:0060288">
    <property type="term" value="P:formation of a compartment boundary"/>
    <property type="evidence" value="ECO:0000315"/>
    <property type="project" value="FlyBase"/>
</dbReference>
<dbReference type="GO" id="GO:0008587">
    <property type="term" value="P:imaginal disc-derived wing margin morphogenesis"/>
    <property type="evidence" value="ECO:0000315"/>
    <property type="project" value="FlyBase"/>
</dbReference>
<dbReference type="GO" id="GO:0061332">
    <property type="term" value="P:Malpighian tubule bud morphogenesis"/>
    <property type="evidence" value="ECO:0000316"/>
    <property type="project" value="FlyBase"/>
</dbReference>
<dbReference type="GO" id="GO:0007443">
    <property type="term" value="P:Malpighian tubule morphogenesis"/>
    <property type="evidence" value="ECO:0000304"/>
    <property type="project" value="FlyBase"/>
</dbReference>
<dbReference type="GO" id="GO:0000122">
    <property type="term" value="P:negative regulation of transcription by RNA polymerase II"/>
    <property type="evidence" value="ECO:0000315"/>
    <property type="project" value="FlyBase"/>
</dbReference>
<dbReference type="GO" id="GO:0048477">
    <property type="term" value="P:oogenesis"/>
    <property type="evidence" value="ECO:0000315"/>
    <property type="project" value="FlyBase"/>
</dbReference>
<dbReference type="GO" id="GO:0007424">
    <property type="term" value="P:open tracheal system development"/>
    <property type="evidence" value="ECO:0000304"/>
    <property type="project" value="FlyBase"/>
</dbReference>
<dbReference type="GO" id="GO:0007422">
    <property type="term" value="P:peripheral nervous system development"/>
    <property type="evidence" value="ECO:0000304"/>
    <property type="project" value="FlyBase"/>
</dbReference>
<dbReference type="GO" id="GO:0006355">
    <property type="term" value="P:regulation of DNA-templated transcription"/>
    <property type="evidence" value="ECO:0000315"/>
    <property type="project" value="FlyBase"/>
</dbReference>
<dbReference type="GO" id="GO:0006357">
    <property type="term" value="P:regulation of transcription by RNA polymerase II"/>
    <property type="evidence" value="ECO:0000318"/>
    <property type="project" value="GO_Central"/>
</dbReference>
<dbReference type="GO" id="GO:0007605">
    <property type="term" value="P:sensory perception of sound"/>
    <property type="evidence" value="ECO:0000315"/>
    <property type="project" value="FlyBase"/>
</dbReference>
<dbReference type="GO" id="GO:0035277">
    <property type="term" value="P:spiracle morphogenesis, open tracheal system"/>
    <property type="evidence" value="ECO:0000315"/>
    <property type="project" value="FlyBase"/>
</dbReference>
<dbReference type="CDD" id="cd00086">
    <property type="entry name" value="homeodomain"/>
    <property type="match status" value="1"/>
</dbReference>
<dbReference type="FunFam" id="1.10.260.40:FF:000004">
    <property type="entry name" value="Cut-like homeobox 1a"/>
    <property type="match status" value="1"/>
</dbReference>
<dbReference type="FunFam" id="1.10.260.40:FF:000010">
    <property type="entry name" value="Cut-like homeobox 1a"/>
    <property type="match status" value="1"/>
</dbReference>
<dbReference type="FunFam" id="1.10.10.60:FF:000298">
    <property type="entry name" value="Homeobox protein cut-like"/>
    <property type="match status" value="1"/>
</dbReference>
<dbReference type="FunFam" id="1.10.260.40:FF:000027">
    <property type="entry name" value="Homeobox protein cut-like"/>
    <property type="match status" value="1"/>
</dbReference>
<dbReference type="Gene3D" id="1.10.10.60">
    <property type="entry name" value="Homeodomain-like"/>
    <property type="match status" value="1"/>
</dbReference>
<dbReference type="Gene3D" id="1.10.260.40">
    <property type="entry name" value="lambda repressor-like DNA-binding domains"/>
    <property type="match status" value="3"/>
</dbReference>
<dbReference type="InterPro" id="IPR003350">
    <property type="entry name" value="CUT_dom"/>
</dbReference>
<dbReference type="InterPro" id="IPR001356">
    <property type="entry name" value="HD"/>
</dbReference>
<dbReference type="InterPro" id="IPR017970">
    <property type="entry name" value="Homeobox_CS"/>
</dbReference>
<dbReference type="InterPro" id="IPR009057">
    <property type="entry name" value="Homeodomain-like_sf"/>
</dbReference>
<dbReference type="InterPro" id="IPR010982">
    <property type="entry name" value="Lambda_DNA-bd_dom_sf"/>
</dbReference>
<dbReference type="PANTHER" id="PTHR14043">
    <property type="entry name" value="CCAAT DISPLACEMENT PROTEIN-RELATED"/>
    <property type="match status" value="1"/>
</dbReference>
<dbReference type="PANTHER" id="PTHR14043:SF2">
    <property type="entry name" value="HOMEOBOX PROTEIN CUT"/>
    <property type="match status" value="1"/>
</dbReference>
<dbReference type="Pfam" id="PF02376">
    <property type="entry name" value="CUT"/>
    <property type="match status" value="3"/>
</dbReference>
<dbReference type="Pfam" id="PF00046">
    <property type="entry name" value="Homeodomain"/>
    <property type="match status" value="1"/>
</dbReference>
<dbReference type="SMART" id="SM01109">
    <property type="entry name" value="CUT"/>
    <property type="match status" value="3"/>
</dbReference>
<dbReference type="SMART" id="SM00389">
    <property type="entry name" value="HOX"/>
    <property type="match status" value="1"/>
</dbReference>
<dbReference type="SUPFAM" id="SSF46689">
    <property type="entry name" value="Homeodomain-like"/>
    <property type="match status" value="1"/>
</dbReference>
<dbReference type="SUPFAM" id="SSF47413">
    <property type="entry name" value="lambda repressor-like DNA-binding domains"/>
    <property type="match status" value="3"/>
</dbReference>
<dbReference type="PROSITE" id="PS51042">
    <property type="entry name" value="CUT"/>
    <property type="match status" value="3"/>
</dbReference>
<dbReference type="PROSITE" id="PS00027">
    <property type="entry name" value="HOMEOBOX_1"/>
    <property type="match status" value="1"/>
</dbReference>
<dbReference type="PROSITE" id="PS50071">
    <property type="entry name" value="HOMEOBOX_2"/>
    <property type="match status" value="1"/>
</dbReference>
<accession>P10180</accession>
<accession>Q9W3Q6</accession>
<feature type="chain" id="PRO_0000202390" description="Homeobox protein cut">
    <location>
        <begin position="1"/>
        <end position="2175"/>
    </location>
</feature>
<feature type="DNA-binding region" description="CUT 1" evidence="3">
    <location>
        <begin position="877"/>
        <end position="964"/>
    </location>
</feature>
<feature type="DNA-binding region" description="CUT 2" evidence="3">
    <location>
        <begin position="1330"/>
        <end position="1417"/>
    </location>
</feature>
<feature type="DNA-binding region" description="CUT 3" evidence="3">
    <location>
        <begin position="1608"/>
        <end position="1695"/>
    </location>
</feature>
<feature type="DNA-binding region" description="Homeobox" evidence="2">
    <location>
        <begin position="1745"/>
        <end position="1804"/>
    </location>
</feature>
<feature type="region of interest" description="Disordered" evidence="4">
    <location>
        <begin position="139"/>
        <end position="170"/>
    </location>
</feature>
<feature type="region of interest" description="Disordered" evidence="4">
    <location>
        <begin position="249"/>
        <end position="432"/>
    </location>
</feature>
<feature type="region of interest" description="Disordered" evidence="4">
    <location>
        <begin position="503"/>
        <end position="600"/>
    </location>
</feature>
<feature type="region of interest" description="Disordered" evidence="4">
    <location>
        <begin position="656"/>
        <end position="765"/>
    </location>
</feature>
<feature type="region of interest" description="Disordered" evidence="4">
    <location>
        <begin position="1001"/>
        <end position="1083"/>
    </location>
</feature>
<feature type="region of interest" description="Disordered" evidence="4">
    <location>
        <begin position="1197"/>
        <end position="1289"/>
    </location>
</feature>
<feature type="region of interest" description="Disordered" evidence="4">
    <location>
        <begin position="1507"/>
        <end position="1588"/>
    </location>
</feature>
<feature type="region of interest" description="Disordered" evidence="4">
    <location>
        <begin position="1695"/>
        <end position="1747"/>
    </location>
</feature>
<feature type="region of interest" description="Disordered" evidence="4">
    <location>
        <begin position="1803"/>
        <end position="1826"/>
    </location>
</feature>
<feature type="region of interest" description="Disordered" evidence="4">
    <location>
        <begin position="1922"/>
        <end position="1955"/>
    </location>
</feature>
<feature type="region of interest" description="Disordered" evidence="4">
    <location>
        <begin position="2069"/>
        <end position="2097"/>
    </location>
</feature>
<feature type="region of interest" description="Disordered" evidence="4">
    <location>
        <begin position="2113"/>
        <end position="2175"/>
    </location>
</feature>
<feature type="coiled-coil region" evidence="1">
    <location>
        <begin position="265"/>
        <end position="343"/>
    </location>
</feature>
<feature type="coiled-coil region" evidence="1">
    <location>
        <begin position="433"/>
        <end position="499"/>
    </location>
</feature>
<feature type="coiled-coil region" evidence="1">
    <location>
        <begin position="1056"/>
        <end position="1161"/>
    </location>
</feature>
<feature type="coiled-coil region" evidence="1">
    <location>
        <begin position="1463"/>
        <end position="1522"/>
    </location>
</feature>
<feature type="compositionally biased region" description="Low complexity" evidence="4">
    <location>
        <begin position="153"/>
        <end position="169"/>
    </location>
</feature>
<feature type="compositionally biased region" description="Low complexity" evidence="4">
    <location>
        <begin position="249"/>
        <end position="268"/>
    </location>
</feature>
<feature type="compositionally biased region" description="Acidic residues" evidence="4">
    <location>
        <begin position="271"/>
        <end position="294"/>
    </location>
</feature>
<feature type="compositionally biased region" description="Polar residues" evidence="4">
    <location>
        <begin position="309"/>
        <end position="320"/>
    </location>
</feature>
<feature type="compositionally biased region" description="Low complexity" evidence="4">
    <location>
        <begin position="344"/>
        <end position="359"/>
    </location>
</feature>
<feature type="compositionally biased region" description="Polar residues" evidence="4">
    <location>
        <begin position="360"/>
        <end position="374"/>
    </location>
</feature>
<feature type="compositionally biased region" description="Low complexity" evidence="4">
    <location>
        <begin position="384"/>
        <end position="415"/>
    </location>
</feature>
<feature type="compositionally biased region" description="Low complexity" evidence="4">
    <location>
        <begin position="503"/>
        <end position="515"/>
    </location>
</feature>
<feature type="compositionally biased region" description="Acidic residues" evidence="4">
    <location>
        <begin position="546"/>
        <end position="568"/>
    </location>
</feature>
<feature type="compositionally biased region" description="Basic residues" evidence="4">
    <location>
        <begin position="673"/>
        <end position="696"/>
    </location>
</feature>
<feature type="compositionally biased region" description="Low complexity" evidence="4">
    <location>
        <begin position="697"/>
        <end position="710"/>
    </location>
</feature>
<feature type="compositionally biased region" description="Basic residues" evidence="4">
    <location>
        <begin position="714"/>
        <end position="735"/>
    </location>
</feature>
<feature type="compositionally biased region" description="Low complexity" evidence="4">
    <location>
        <begin position="738"/>
        <end position="765"/>
    </location>
</feature>
<feature type="compositionally biased region" description="Basic and acidic residues" evidence="4">
    <location>
        <begin position="1009"/>
        <end position="1030"/>
    </location>
</feature>
<feature type="compositionally biased region" description="Basic and acidic residues" evidence="4">
    <location>
        <begin position="1062"/>
        <end position="1083"/>
    </location>
</feature>
<feature type="compositionally biased region" description="Low complexity" evidence="4">
    <location>
        <begin position="1249"/>
        <end position="1282"/>
    </location>
</feature>
<feature type="compositionally biased region" description="Low complexity" evidence="4">
    <location>
        <begin position="1507"/>
        <end position="1540"/>
    </location>
</feature>
<feature type="compositionally biased region" description="Gly residues" evidence="4">
    <location>
        <begin position="1564"/>
        <end position="1573"/>
    </location>
</feature>
<feature type="compositionally biased region" description="Low complexity" evidence="4">
    <location>
        <begin position="1709"/>
        <end position="1732"/>
    </location>
</feature>
<feature type="compositionally biased region" description="Pro residues" evidence="4">
    <location>
        <begin position="2126"/>
        <end position="2135"/>
    </location>
</feature>
<feature type="compositionally biased region" description="Low complexity" evidence="4">
    <location>
        <begin position="2136"/>
        <end position="2175"/>
    </location>
</feature>
<feature type="modified residue" description="Phosphoserine" evidence="5">
    <location>
        <position position="1940"/>
    </location>
</feature>
<feature type="modified residue" description="Phosphoserine" evidence="5">
    <location>
        <position position="1944"/>
    </location>
</feature>